<accession>A7GT67</accession>
<protein>
    <recommendedName>
        <fullName evidence="1">Alanine--tRNA ligase</fullName>
        <ecNumber evidence="1">6.1.1.7</ecNumber>
    </recommendedName>
    <alternativeName>
        <fullName evidence="1">Alanyl-tRNA synthetase</fullName>
        <shortName evidence="1">AlaRS</shortName>
    </alternativeName>
</protein>
<organism>
    <name type="scientific">Bacillus cytotoxicus (strain DSM 22905 / CIP 110041 / 391-98 / NVH 391-98)</name>
    <dbReference type="NCBI Taxonomy" id="315749"/>
    <lineage>
        <taxon>Bacteria</taxon>
        <taxon>Bacillati</taxon>
        <taxon>Bacillota</taxon>
        <taxon>Bacilli</taxon>
        <taxon>Bacillales</taxon>
        <taxon>Bacillaceae</taxon>
        <taxon>Bacillus</taxon>
        <taxon>Bacillus cereus group</taxon>
    </lineage>
</organism>
<name>SYA_BACCN</name>
<dbReference type="EC" id="6.1.1.7" evidence="1"/>
<dbReference type="EMBL" id="CP000764">
    <property type="protein sequence ID" value="ABS23325.1"/>
    <property type="molecule type" value="Genomic_DNA"/>
</dbReference>
<dbReference type="RefSeq" id="WP_012095562.1">
    <property type="nucleotide sequence ID" value="NC_009674.1"/>
</dbReference>
<dbReference type="SMR" id="A7GT67"/>
<dbReference type="STRING" id="315749.Bcer98_3101"/>
<dbReference type="GeneID" id="33898348"/>
<dbReference type="KEGG" id="bcy:Bcer98_3101"/>
<dbReference type="eggNOG" id="COG0013">
    <property type="taxonomic scope" value="Bacteria"/>
</dbReference>
<dbReference type="HOGENOM" id="CLU_004485_1_1_9"/>
<dbReference type="OrthoDB" id="9803884at2"/>
<dbReference type="Proteomes" id="UP000002300">
    <property type="component" value="Chromosome"/>
</dbReference>
<dbReference type="GO" id="GO:0005829">
    <property type="term" value="C:cytosol"/>
    <property type="evidence" value="ECO:0007669"/>
    <property type="project" value="TreeGrafter"/>
</dbReference>
<dbReference type="GO" id="GO:0004813">
    <property type="term" value="F:alanine-tRNA ligase activity"/>
    <property type="evidence" value="ECO:0007669"/>
    <property type="project" value="UniProtKB-UniRule"/>
</dbReference>
<dbReference type="GO" id="GO:0002161">
    <property type="term" value="F:aminoacyl-tRNA deacylase activity"/>
    <property type="evidence" value="ECO:0007669"/>
    <property type="project" value="TreeGrafter"/>
</dbReference>
<dbReference type="GO" id="GO:0005524">
    <property type="term" value="F:ATP binding"/>
    <property type="evidence" value="ECO:0007669"/>
    <property type="project" value="UniProtKB-UniRule"/>
</dbReference>
<dbReference type="GO" id="GO:0140096">
    <property type="term" value="F:catalytic activity, acting on a protein"/>
    <property type="evidence" value="ECO:0007669"/>
    <property type="project" value="UniProtKB-ARBA"/>
</dbReference>
<dbReference type="GO" id="GO:0016740">
    <property type="term" value="F:transferase activity"/>
    <property type="evidence" value="ECO:0007669"/>
    <property type="project" value="UniProtKB-ARBA"/>
</dbReference>
<dbReference type="GO" id="GO:0000049">
    <property type="term" value="F:tRNA binding"/>
    <property type="evidence" value="ECO:0007669"/>
    <property type="project" value="UniProtKB-KW"/>
</dbReference>
<dbReference type="GO" id="GO:0008270">
    <property type="term" value="F:zinc ion binding"/>
    <property type="evidence" value="ECO:0007669"/>
    <property type="project" value="UniProtKB-UniRule"/>
</dbReference>
<dbReference type="GO" id="GO:0006419">
    <property type="term" value="P:alanyl-tRNA aminoacylation"/>
    <property type="evidence" value="ECO:0007669"/>
    <property type="project" value="UniProtKB-UniRule"/>
</dbReference>
<dbReference type="CDD" id="cd00673">
    <property type="entry name" value="AlaRS_core"/>
    <property type="match status" value="1"/>
</dbReference>
<dbReference type="FunFam" id="2.40.30.130:FF:000001">
    <property type="entry name" value="Alanine--tRNA ligase"/>
    <property type="match status" value="1"/>
</dbReference>
<dbReference type="FunFam" id="3.10.310.40:FF:000001">
    <property type="entry name" value="Alanine--tRNA ligase"/>
    <property type="match status" value="1"/>
</dbReference>
<dbReference type="FunFam" id="3.30.54.20:FF:000001">
    <property type="entry name" value="Alanine--tRNA ligase"/>
    <property type="match status" value="1"/>
</dbReference>
<dbReference type="FunFam" id="3.30.930.10:FF:000046">
    <property type="entry name" value="Alanine--tRNA ligase"/>
    <property type="match status" value="1"/>
</dbReference>
<dbReference type="FunFam" id="3.30.980.10:FF:000004">
    <property type="entry name" value="Alanine--tRNA ligase, cytoplasmic"/>
    <property type="match status" value="1"/>
</dbReference>
<dbReference type="Gene3D" id="2.40.30.130">
    <property type="match status" value="1"/>
</dbReference>
<dbReference type="Gene3D" id="3.10.310.40">
    <property type="match status" value="1"/>
</dbReference>
<dbReference type="Gene3D" id="3.30.54.20">
    <property type="match status" value="1"/>
</dbReference>
<dbReference type="Gene3D" id="6.10.250.550">
    <property type="match status" value="1"/>
</dbReference>
<dbReference type="Gene3D" id="3.30.930.10">
    <property type="entry name" value="Bira Bifunctional Protein, Domain 2"/>
    <property type="match status" value="1"/>
</dbReference>
<dbReference type="Gene3D" id="3.30.980.10">
    <property type="entry name" value="Threonyl-trna Synthetase, Chain A, domain 2"/>
    <property type="match status" value="1"/>
</dbReference>
<dbReference type="HAMAP" id="MF_00036_B">
    <property type="entry name" value="Ala_tRNA_synth_B"/>
    <property type="match status" value="1"/>
</dbReference>
<dbReference type="InterPro" id="IPR045864">
    <property type="entry name" value="aa-tRNA-synth_II/BPL/LPL"/>
</dbReference>
<dbReference type="InterPro" id="IPR002318">
    <property type="entry name" value="Ala-tRNA-lgiase_IIc"/>
</dbReference>
<dbReference type="InterPro" id="IPR018162">
    <property type="entry name" value="Ala-tRNA-ligase_IIc_anticod-bd"/>
</dbReference>
<dbReference type="InterPro" id="IPR018165">
    <property type="entry name" value="Ala-tRNA-synth_IIc_core"/>
</dbReference>
<dbReference type="InterPro" id="IPR018164">
    <property type="entry name" value="Ala-tRNA-synth_IIc_N"/>
</dbReference>
<dbReference type="InterPro" id="IPR050058">
    <property type="entry name" value="Ala-tRNA_ligase"/>
</dbReference>
<dbReference type="InterPro" id="IPR023033">
    <property type="entry name" value="Ala_tRNA_ligase_euk/bac"/>
</dbReference>
<dbReference type="InterPro" id="IPR003156">
    <property type="entry name" value="DHHA1_dom"/>
</dbReference>
<dbReference type="InterPro" id="IPR018163">
    <property type="entry name" value="Thr/Ala-tRNA-synth_IIc_edit"/>
</dbReference>
<dbReference type="InterPro" id="IPR009000">
    <property type="entry name" value="Transl_B-barrel_sf"/>
</dbReference>
<dbReference type="InterPro" id="IPR012947">
    <property type="entry name" value="tRNA_SAD"/>
</dbReference>
<dbReference type="NCBIfam" id="TIGR00344">
    <property type="entry name" value="alaS"/>
    <property type="match status" value="1"/>
</dbReference>
<dbReference type="PANTHER" id="PTHR11777:SF9">
    <property type="entry name" value="ALANINE--TRNA LIGASE, CYTOPLASMIC"/>
    <property type="match status" value="1"/>
</dbReference>
<dbReference type="PANTHER" id="PTHR11777">
    <property type="entry name" value="ALANYL-TRNA SYNTHETASE"/>
    <property type="match status" value="1"/>
</dbReference>
<dbReference type="Pfam" id="PF02272">
    <property type="entry name" value="DHHA1"/>
    <property type="match status" value="1"/>
</dbReference>
<dbReference type="Pfam" id="PF01411">
    <property type="entry name" value="tRNA-synt_2c"/>
    <property type="match status" value="1"/>
</dbReference>
<dbReference type="Pfam" id="PF07973">
    <property type="entry name" value="tRNA_SAD"/>
    <property type="match status" value="1"/>
</dbReference>
<dbReference type="PRINTS" id="PR00980">
    <property type="entry name" value="TRNASYNTHALA"/>
</dbReference>
<dbReference type="SMART" id="SM00863">
    <property type="entry name" value="tRNA_SAD"/>
    <property type="match status" value="1"/>
</dbReference>
<dbReference type="SUPFAM" id="SSF55681">
    <property type="entry name" value="Class II aaRS and biotin synthetases"/>
    <property type="match status" value="1"/>
</dbReference>
<dbReference type="SUPFAM" id="SSF101353">
    <property type="entry name" value="Putative anticodon-binding domain of alanyl-tRNA synthetase (AlaRS)"/>
    <property type="match status" value="1"/>
</dbReference>
<dbReference type="SUPFAM" id="SSF55186">
    <property type="entry name" value="ThrRS/AlaRS common domain"/>
    <property type="match status" value="1"/>
</dbReference>
<dbReference type="SUPFAM" id="SSF50447">
    <property type="entry name" value="Translation proteins"/>
    <property type="match status" value="1"/>
</dbReference>
<dbReference type="PROSITE" id="PS50860">
    <property type="entry name" value="AA_TRNA_LIGASE_II_ALA"/>
    <property type="match status" value="1"/>
</dbReference>
<gene>
    <name evidence="1" type="primary">alaS</name>
    <name type="ordered locus">Bcer98_3101</name>
</gene>
<keyword id="KW-0030">Aminoacyl-tRNA synthetase</keyword>
<keyword id="KW-0067">ATP-binding</keyword>
<keyword id="KW-0963">Cytoplasm</keyword>
<keyword id="KW-0436">Ligase</keyword>
<keyword id="KW-0479">Metal-binding</keyword>
<keyword id="KW-0547">Nucleotide-binding</keyword>
<keyword id="KW-0648">Protein biosynthesis</keyword>
<keyword id="KW-0694">RNA-binding</keyword>
<keyword id="KW-0820">tRNA-binding</keyword>
<keyword id="KW-0862">Zinc</keyword>
<proteinExistence type="inferred from homology"/>
<comment type="function">
    <text evidence="1">Catalyzes the attachment of alanine to tRNA(Ala) in a two-step reaction: alanine is first activated by ATP to form Ala-AMP and then transferred to the acceptor end of tRNA(Ala). Also edits incorrectly charged Ser-tRNA(Ala) and Gly-tRNA(Ala) via its editing domain.</text>
</comment>
<comment type="catalytic activity">
    <reaction evidence="1">
        <text>tRNA(Ala) + L-alanine + ATP = L-alanyl-tRNA(Ala) + AMP + diphosphate</text>
        <dbReference type="Rhea" id="RHEA:12540"/>
        <dbReference type="Rhea" id="RHEA-COMP:9657"/>
        <dbReference type="Rhea" id="RHEA-COMP:9923"/>
        <dbReference type="ChEBI" id="CHEBI:30616"/>
        <dbReference type="ChEBI" id="CHEBI:33019"/>
        <dbReference type="ChEBI" id="CHEBI:57972"/>
        <dbReference type="ChEBI" id="CHEBI:78442"/>
        <dbReference type="ChEBI" id="CHEBI:78497"/>
        <dbReference type="ChEBI" id="CHEBI:456215"/>
        <dbReference type="EC" id="6.1.1.7"/>
    </reaction>
</comment>
<comment type="cofactor">
    <cofactor evidence="1">
        <name>Zn(2+)</name>
        <dbReference type="ChEBI" id="CHEBI:29105"/>
    </cofactor>
    <text evidence="1">Binds 1 zinc ion per subunit.</text>
</comment>
<comment type="subcellular location">
    <subcellularLocation>
        <location evidence="1">Cytoplasm</location>
    </subcellularLocation>
</comment>
<comment type="domain">
    <text evidence="1">Consists of three domains; the N-terminal catalytic domain, the editing domain and the C-terminal C-Ala domain. The editing domain removes incorrectly charged amino acids, while the C-Ala domain, along with tRNA(Ala), serves as a bridge to cooperatively bring together the editing and aminoacylation centers thus stimulating deacylation of misacylated tRNAs.</text>
</comment>
<comment type="similarity">
    <text evidence="1">Belongs to the class-II aminoacyl-tRNA synthetase family.</text>
</comment>
<reference key="1">
    <citation type="journal article" date="2008" name="Chem. Biol. Interact.">
        <title>Extending the Bacillus cereus group genomics to putative food-borne pathogens of different toxicity.</title>
        <authorList>
            <person name="Lapidus A."/>
            <person name="Goltsman E."/>
            <person name="Auger S."/>
            <person name="Galleron N."/>
            <person name="Segurens B."/>
            <person name="Dossat C."/>
            <person name="Land M.L."/>
            <person name="Broussolle V."/>
            <person name="Brillard J."/>
            <person name="Guinebretiere M.-H."/>
            <person name="Sanchis V."/>
            <person name="Nguen-the C."/>
            <person name="Lereclus D."/>
            <person name="Richardson P."/>
            <person name="Wincker P."/>
            <person name="Weissenbach J."/>
            <person name="Ehrlich S.D."/>
            <person name="Sorokin A."/>
        </authorList>
    </citation>
    <scope>NUCLEOTIDE SEQUENCE [LARGE SCALE GENOMIC DNA]</scope>
    <source>
        <strain>DSM 22905 / CIP 110041 / 391-98 / NVH 391-98</strain>
    </source>
</reference>
<feature type="chain" id="PRO_0000347498" description="Alanine--tRNA ligase">
    <location>
        <begin position="1"/>
        <end position="880"/>
    </location>
</feature>
<feature type="binding site" evidence="1">
    <location>
        <position position="567"/>
    </location>
    <ligand>
        <name>Zn(2+)</name>
        <dbReference type="ChEBI" id="CHEBI:29105"/>
    </ligand>
</feature>
<feature type="binding site" evidence="1">
    <location>
        <position position="571"/>
    </location>
    <ligand>
        <name>Zn(2+)</name>
        <dbReference type="ChEBI" id="CHEBI:29105"/>
    </ligand>
</feature>
<feature type="binding site" evidence="1">
    <location>
        <position position="669"/>
    </location>
    <ligand>
        <name>Zn(2+)</name>
        <dbReference type="ChEBI" id="CHEBI:29105"/>
    </ligand>
</feature>
<feature type="binding site" evidence="1">
    <location>
        <position position="673"/>
    </location>
    <ligand>
        <name>Zn(2+)</name>
        <dbReference type="ChEBI" id="CHEBI:29105"/>
    </ligand>
</feature>
<evidence type="ECO:0000255" key="1">
    <source>
        <dbReference type="HAMAP-Rule" id="MF_00036"/>
    </source>
</evidence>
<sequence length="880" mass="97156">MKQLTGAQIRQMFLDFFKEKGHAIEPSASLVPHEDPSLLWINSGVATLKKYFDGRVIPQNPRITNAQKSIRTNDIENVGKTARHHTFFEMLGNFSIGDYFKEEAITWAWEFLTSDKWIGFDKELLSVTIHPEDEEAFTIWHEKIGVPKERIIRLEENFWDIGEGPSGPNTEIFYDRGEAYGNDPSDPELYPGGENERYLEVWNLVFSQFNHNPDGSYTPLPKKNIDTGMGLERMTSIVQNVPTNFDTDLFMPMIGATESISGEKYRSGDAEKDMAFKVIADHIRTVTFAVGDGALPSNEGRGYVLRRLLRRAVRYAKKLNMNRPFMYELVPVVGEVMKDFYPEVLEKKDFIAKVVKNEEERFHETLHDGEAILAEVIAKAKEEKTTVISGVDAFRLYDTYGFPVELTEEYAEEAGMTVDHAGFEAEMEKQRERARAARQDVDSMQVQGGVLGEIKVASEFVGYGTVATESNVVALVKNGEYTDSLQAGEEGQLMLDVTPFYAESGGQIADSGYLLTDGVKVLVKDVQKAPNGQNLHKVVVEEGVLTKDATVKAVIDTKNRSSIVKNHTATHLLHQALKDVLGTHVNQAGSLVTAERLRFDFSHFGQVQADELEKIERIVNEKIWESIDVEISQKAIEEAKEMGAMALFGEKYGDVVRVVQVGDYSLELCGGCHVDNTASIGIFKIVAESGIGAGTRRIEAVTGKAAYELMNDQVSLLKEAAGKMKTNPKDILTRVDGLFAEVKQLQKENESLAAKLSNIEAGNLTDAVVSVDGINVLATKVNVADMNNLRTMMDDLKNKLESAVIVLAAVNDDKVNILAGVTKDLVGQGYHAGKLVKEVASRCGGGGGGRPDMAQAGGKNPAQVDEALAFVQEYVKSVSK</sequence>